<name>UBL5_DICDI</name>
<comment type="subcellular location">
    <subcellularLocation>
        <location evidence="1">Cytoplasm</location>
    </subcellularLocation>
</comment>
<comment type="sequence caution" evidence="2">
    <conflict type="erroneous gene model prediction">
        <sequence resource="EMBL-CDS" id="EAL65291"/>
    </conflict>
</comment>
<accession>Q54Q03</accession>
<proteinExistence type="inferred from homology"/>
<protein>
    <recommendedName>
        <fullName>Ubiquitin-like protein 5</fullName>
    </recommendedName>
</protein>
<reference key="1">
    <citation type="journal article" date="2005" name="Nature">
        <title>The genome of the social amoeba Dictyostelium discoideum.</title>
        <authorList>
            <person name="Eichinger L."/>
            <person name="Pachebat J.A."/>
            <person name="Gloeckner G."/>
            <person name="Rajandream M.A."/>
            <person name="Sucgang R."/>
            <person name="Berriman M."/>
            <person name="Song J."/>
            <person name="Olsen R."/>
            <person name="Szafranski K."/>
            <person name="Xu Q."/>
            <person name="Tunggal B."/>
            <person name="Kummerfeld S."/>
            <person name="Madera M."/>
            <person name="Konfortov B.A."/>
            <person name="Rivero F."/>
            <person name="Bankier A.T."/>
            <person name="Lehmann R."/>
            <person name="Hamlin N."/>
            <person name="Davies R."/>
            <person name="Gaudet P."/>
            <person name="Fey P."/>
            <person name="Pilcher K."/>
            <person name="Chen G."/>
            <person name="Saunders D."/>
            <person name="Sodergren E.J."/>
            <person name="Davis P."/>
            <person name="Kerhornou A."/>
            <person name="Nie X."/>
            <person name="Hall N."/>
            <person name="Anjard C."/>
            <person name="Hemphill L."/>
            <person name="Bason N."/>
            <person name="Farbrother P."/>
            <person name="Desany B."/>
            <person name="Just E."/>
            <person name="Morio T."/>
            <person name="Rost R."/>
            <person name="Churcher C.M."/>
            <person name="Cooper J."/>
            <person name="Haydock S."/>
            <person name="van Driessche N."/>
            <person name="Cronin A."/>
            <person name="Goodhead I."/>
            <person name="Muzny D.M."/>
            <person name="Mourier T."/>
            <person name="Pain A."/>
            <person name="Lu M."/>
            <person name="Harper D."/>
            <person name="Lindsay R."/>
            <person name="Hauser H."/>
            <person name="James K.D."/>
            <person name="Quiles M."/>
            <person name="Madan Babu M."/>
            <person name="Saito T."/>
            <person name="Buchrieser C."/>
            <person name="Wardroper A."/>
            <person name="Felder M."/>
            <person name="Thangavelu M."/>
            <person name="Johnson D."/>
            <person name="Knights A."/>
            <person name="Loulseged H."/>
            <person name="Mungall K.L."/>
            <person name="Oliver K."/>
            <person name="Price C."/>
            <person name="Quail M.A."/>
            <person name="Urushihara H."/>
            <person name="Hernandez J."/>
            <person name="Rabbinowitsch E."/>
            <person name="Steffen D."/>
            <person name="Sanders M."/>
            <person name="Ma J."/>
            <person name="Kohara Y."/>
            <person name="Sharp S."/>
            <person name="Simmonds M.N."/>
            <person name="Spiegler S."/>
            <person name="Tivey A."/>
            <person name="Sugano S."/>
            <person name="White B."/>
            <person name="Walker D."/>
            <person name="Woodward J.R."/>
            <person name="Winckler T."/>
            <person name="Tanaka Y."/>
            <person name="Shaulsky G."/>
            <person name="Schleicher M."/>
            <person name="Weinstock G.M."/>
            <person name="Rosenthal A."/>
            <person name="Cox E.C."/>
            <person name="Chisholm R.L."/>
            <person name="Gibbs R.A."/>
            <person name="Loomis W.F."/>
            <person name="Platzer M."/>
            <person name="Kay R.R."/>
            <person name="Williams J.G."/>
            <person name="Dear P.H."/>
            <person name="Noegel A.A."/>
            <person name="Barrell B.G."/>
            <person name="Kuspa A."/>
        </authorList>
    </citation>
    <scope>NUCLEOTIDE SEQUENCE [LARGE SCALE GENOMIC DNA]</scope>
    <source>
        <strain>AX4</strain>
    </source>
</reference>
<dbReference type="EMBL" id="AAFI02000064">
    <property type="protein sequence ID" value="EAL65291.1"/>
    <property type="status" value="ALT_SEQ"/>
    <property type="molecule type" value="Genomic_DNA"/>
</dbReference>
<dbReference type="RefSeq" id="XP_638642.1">
    <property type="nucleotide sequence ID" value="XM_633550.1"/>
</dbReference>
<dbReference type="SMR" id="Q54Q03"/>
<dbReference type="FunCoup" id="Q54Q03">
    <property type="interactions" value="515"/>
</dbReference>
<dbReference type="STRING" id="44689.Q54Q03"/>
<dbReference type="EnsemblProtists" id="EAL65291">
    <property type="protein sequence ID" value="EAL65291"/>
    <property type="gene ID" value="DDB_G0284205"/>
</dbReference>
<dbReference type="GeneID" id="8624473"/>
<dbReference type="KEGG" id="ddi:DDB_G0284205"/>
<dbReference type="dictyBase" id="DDB_G0284205">
    <property type="gene designation" value="ubl5"/>
</dbReference>
<dbReference type="VEuPathDB" id="AmoebaDB:DDB_G0284205"/>
<dbReference type="InParanoid" id="Q54Q03"/>
<dbReference type="PRO" id="PR:Q54Q03"/>
<dbReference type="Proteomes" id="UP000002195">
    <property type="component" value="Chromosome 4"/>
</dbReference>
<dbReference type="GO" id="GO:0005737">
    <property type="term" value="C:cytoplasm"/>
    <property type="evidence" value="ECO:0000250"/>
    <property type="project" value="dictyBase"/>
</dbReference>
<dbReference type="GO" id="GO:0005634">
    <property type="term" value="C:nucleus"/>
    <property type="evidence" value="ECO:0000250"/>
    <property type="project" value="dictyBase"/>
</dbReference>
<dbReference type="GO" id="GO:0031386">
    <property type="term" value="F:protein tag activity"/>
    <property type="evidence" value="ECO:0000318"/>
    <property type="project" value="GO_Central"/>
</dbReference>
<dbReference type="GO" id="GO:0000398">
    <property type="term" value="P:mRNA splicing, via spliceosome"/>
    <property type="evidence" value="ECO:0000250"/>
    <property type="project" value="dictyBase"/>
</dbReference>
<dbReference type="GO" id="GO:0036211">
    <property type="term" value="P:protein modification process"/>
    <property type="evidence" value="ECO:0000318"/>
    <property type="project" value="GO_Central"/>
</dbReference>
<dbReference type="FunFam" id="3.10.20.90:FF:000052">
    <property type="entry name" value="Ubiquitin-like protein 5"/>
    <property type="match status" value="1"/>
</dbReference>
<dbReference type="Gene3D" id="3.10.20.90">
    <property type="entry name" value="Phosphatidylinositol 3-kinase Catalytic Subunit, Chain A, domain 1"/>
    <property type="match status" value="1"/>
</dbReference>
<dbReference type="InterPro" id="IPR039732">
    <property type="entry name" value="Hub1/Ubl5"/>
</dbReference>
<dbReference type="InterPro" id="IPR000626">
    <property type="entry name" value="Ubiquitin-like_dom"/>
</dbReference>
<dbReference type="InterPro" id="IPR029071">
    <property type="entry name" value="Ubiquitin-like_domsf"/>
</dbReference>
<dbReference type="PANTHER" id="PTHR13042">
    <property type="entry name" value="UBIQUITIN-LIKE PROTEIN 5"/>
    <property type="match status" value="1"/>
</dbReference>
<dbReference type="Pfam" id="PF00240">
    <property type="entry name" value="ubiquitin"/>
    <property type="match status" value="1"/>
</dbReference>
<dbReference type="SUPFAM" id="SSF54236">
    <property type="entry name" value="Ubiquitin-like"/>
    <property type="match status" value="1"/>
</dbReference>
<feature type="chain" id="PRO_0000328902" description="Ubiquitin-like protein 5">
    <location>
        <begin position="1"/>
        <end position="67"/>
    </location>
</feature>
<feature type="domain" description="Ubiquitin-like">
    <location>
        <begin position="2"/>
        <end position="67"/>
    </location>
</feature>
<keyword id="KW-0963">Cytoplasm</keyword>
<keyword id="KW-1185">Reference proteome</keyword>
<keyword id="KW-0833">Ubl conjugation pathway</keyword>
<organism>
    <name type="scientific">Dictyostelium discoideum</name>
    <name type="common">Social amoeba</name>
    <dbReference type="NCBI Taxonomy" id="44689"/>
    <lineage>
        <taxon>Eukaryota</taxon>
        <taxon>Amoebozoa</taxon>
        <taxon>Evosea</taxon>
        <taxon>Eumycetozoa</taxon>
        <taxon>Dictyostelia</taxon>
        <taxon>Dictyosteliales</taxon>
        <taxon>Dictyosteliaceae</taxon>
        <taxon>Dictyostelium</taxon>
    </lineage>
</organism>
<sequence>MIEVVCNDRLGNKVRVKVNSDDTIGDLKKVLSAQIGIKAEKIRLQKSYSIFKDHEIHDGDGLELYYN</sequence>
<evidence type="ECO:0000250" key="1"/>
<evidence type="ECO:0000305" key="2"/>
<gene>
    <name type="primary">ubl5</name>
    <name type="synonym">hub1</name>
    <name type="ORF">DDB_G0284205</name>
</gene>